<protein>
    <recommendedName>
        <fullName>Homeobox protein knotted-1-like 1</fullName>
    </recommendedName>
    <alternativeName>
        <fullName>KNAP1</fullName>
    </alternativeName>
</protein>
<keyword id="KW-0238">DNA-binding</keyword>
<keyword id="KW-0371">Homeobox</keyword>
<keyword id="KW-0539">Nucleus</keyword>
<sequence length="398" mass="45172">MEDYNNQMDHESSGGRGNFLYASPNLGGNYGRAASDHQMGINTFHLQSSGGGGGGGSGDQCNFQSPGTHPINVKTEATTSQHGHPKFQYNNNNNNHHLVSSSRGHQPVVHQLQHNLDLQNDDHSLSSNEVEAIKAKIIAHPQYSNLVEAYMDCQRVGAPSDVVPRLSVARQEFEARQRSSGTSRETSKDPELDQFMEAYYDMLVKYREELTRPIQEAMDFMRRIETQLNMLGNNNNAPPLRIFSPSEDKCEGIGSSEDEQENSGGETEVPEIDPRAEDRELKNHLLRKYSGYLSSLKQELSKKKKKGKLPKEARQKLLSWWELHYKWPYPSESEKVALAESTGLDQKQINNWFINQRKRHWKPSEDMQFMVMDGLHPQNAALYMDGHYTGDVHYRLGP</sequence>
<organism>
    <name type="scientific">Malus domestica</name>
    <name type="common">Apple</name>
    <name type="synonym">Pyrus malus</name>
    <dbReference type="NCBI Taxonomy" id="3750"/>
    <lineage>
        <taxon>Eukaryota</taxon>
        <taxon>Viridiplantae</taxon>
        <taxon>Streptophyta</taxon>
        <taxon>Embryophyta</taxon>
        <taxon>Tracheophyta</taxon>
        <taxon>Spermatophyta</taxon>
        <taxon>Magnoliopsida</taxon>
        <taxon>eudicotyledons</taxon>
        <taxon>Gunneridae</taxon>
        <taxon>Pentapetalae</taxon>
        <taxon>rosids</taxon>
        <taxon>fabids</taxon>
        <taxon>Rosales</taxon>
        <taxon>Rosaceae</taxon>
        <taxon>Amygdaloideae</taxon>
        <taxon>Maleae</taxon>
        <taxon>Malus</taxon>
    </lineage>
</organism>
<accession>O04134</accession>
<proteinExistence type="evidence at transcript level"/>
<evidence type="ECO:0000255" key="1">
    <source>
        <dbReference type="PROSITE-ProRule" id="PRU00108"/>
    </source>
</evidence>
<evidence type="ECO:0000255" key="2">
    <source>
        <dbReference type="PROSITE-ProRule" id="PRU00559"/>
    </source>
</evidence>
<evidence type="ECO:0000256" key="3">
    <source>
        <dbReference type="SAM" id="MobiDB-lite"/>
    </source>
</evidence>
<evidence type="ECO:0000305" key="4"/>
<feature type="chain" id="PRO_0000048975" description="Homeobox protein knotted-1-like 1">
    <location>
        <begin position="1"/>
        <end position="398"/>
    </location>
</feature>
<feature type="domain" description="ELK" evidence="2">
    <location>
        <begin position="280"/>
        <end position="300"/>
    </location>
</feature>
<feature type="DNA-binding region" description="Homeobox; TALE-type" evidence="1">
    <location>
        <begin position="301"/>
        <end position="364"/>
    </location>
</feature>
<feature type="region of interest" description="Disordered" evidence="3">
    <location>
        <begin position="43"/>
        <end position="69"/>
    </location>
</feature>
<feature type="region of interest" description="Disordered" evidence="3">
    <location>
        <begin position="172"/>
        <end position="192"/>
    </location>
</feature>
<feature type="region of interest" description="Disordered" evidence="3">
    <location>
        <begin position="234"/>
        <end position="277"/>
    </location>
</feature>
<feature type="compositionally biased region" description="Gly residues" evidence="3">
    <location>
        <begin position="49"/>
        <end position="58"/>
    </location>
</feature>
<name>KNAP1_MALDO</name>
<dbReference type="EMBL" id="Z71978">
    <property type="protein sequence ID" value="CAA96510.1"/>
    <property type="molecule type" value="mRNA"/>
</dbReference>
<dbReference type="PIR" id="T17009">
    <property type="entry name" value="T17009"/>
</dbReference>
<dbReference type="RefSeq" id="NP_001298100.1">
    <property type="nucleotide sequence ID" value="NM_001311171.1"/>
</dbReference>
<dbReference type="SMR" id="O04134"/>
<dbReference type="EnsemblPlants" id="mRNA:MD08G0065100">
    <property type="protein sequence ID" value="mRNA:MD08G0065100"/>
    <property type="gene ID" value="MD08G0065100"/>
</dbReference>
<dbReference type="GeneID" id="103410692"/>
<dbReference type="Gramene" id="mRNA:MD08G0065100">
    <property type="protein sequence ID" value="mRNA:MD08G0065100"/>
    <property type="gene ID" value="MD08G0065100"/>
</dbReference>
<dbReference type="KEGG" id="mdm:103410692"/>
<dbReference type="OrthoDB" id="10056939at2759"/>
<dbReference type="GO" id="GO:0005634">
    <property type="term" value="C:nucleus"/>
    <property type="evidence" value="ECO:0007669"/>
    <property type="project" value="UniProtKB-SubCell"/>
</dbReference>
<dbReference type="GO" id="GO:0003677">
    <property type="term" value="F:DNA binding"/>
    <property type="evidence" value="ECO:0007669"/>
    <property type="project" value="UniProtKB-KW"/>
</dbReference>
<dbReference type="GO" id="GO:0000981">
    <property type="term" value="F:DNA-binding transcription factor activity, RNA polymerase II-specific"/>
    <property type="evidence" value="ECO:0007669"/>
    <property type="project" value="InterPro"/>
</dbReference>
<dbReference type="CDD" id="cd00086">
    <property type="entry name" value="homeodomain"/>
    <property type="match status" value="1"/>
</dbReference>
<dbReference type="FunFam" id="1.10.10.60:FF:000076">
    <property type="entry name" value="Homeobox protein knotted-1-like 2"/>
    <property type="match status" value="1"/>
</dbReference>
<dbReference type="Gene3D" id="1.10.10.60">
    <property type="entry name" value="Homeodomain-like"/>
    <property type="match status" value="1"/>
</dbReference>
<dbReference type="InterPro" id="IPR005539">
    <property type="entry name" value="ELK_dom"/>
</dbReference>
<dbReference type="InterPro" id="IPR001356">
    <property type="entry name" value="HD"/>
</dbReference>
<dbReference type="InterPro" id="IPR017970">
    <property type="entry name" value="Homeobox_CS"/>
</dbReference>
<dbReference type="InterPro" id="IPR009057">
    <property type="entry name" value="Homeodomain-like_sf"/>
</dbReference>
<dbReference type="InterPro" id="IPR008422">
    <property type="entry name" value="KN_HD"/>
</dbReference>
<dbReference type="InterPro" id="IPR005540">
    <property type="entry name" value="KNOX1"/>
</dbReference>
<dbReference type="InterPro" id="IPR005541">
    <property type="entry name" value="KNOX2"/>
</dbReference>
<dbReference type="InterPro" id="IPR050224">
    <property type="entry name" value="TALE_homeobox"/>
</dbReference>
<dbReference type="PANTHER" id="PTHR11850">
    <property type="entry name" value="HOMEOBOX PROTEIN TRANSCRIPTION FACTORS"/>
    <property type="match status" value="1"/>
</dbReference>
<dbReference type="Pfam" id="PF03789">
    <property type="entry name" value="ELK"/>
    <property type="match status" value="1"/>
</dbReference>
<dbReference type="Pfam" id="PF05920">
    <property type="entry name" value="Homeobox_KN"/>
    <property type="match status" value="1"/>
</dbReference>
<dbReference type="Pfam" id="PF03790">
    <property type="entry name" value="KNOX1"/>
    <property type="match status" value="1"/>
</dbReference>
<dbReference type="Pfam" id="PF03791">
    <property type="entry name" value="KNOX2"/>
    <property type="match status" value="1"/>
</dbReference>
<dbReference type="SMART" id="SM01188">
    <property type="entry name" value="ELK"/>
    <property type="match status" value="1"/>
</dbReference>
<dbReference type="SMART" id="SM00389">
    <property type="entry name" value="HOX"/>
    <property type="match status" value="1"/>
</dbReference>
<dbReference type="SMART" id="SM01255">
    <property type="entry name" value="KNOX1"/>
    <property type="match status" value="1"/>
</dbReference>
<dbReference type="SMART" id="SM01256">
    <property type="entry name" value="KNOX2"/>
    <property type="match status" value="1"/>
</dbReference>
<dbReference type="SUPFAM" id="SSF46689">
    <property type="entry name" value="Homeodomain-like"/>
    <property type="match status" value="1"/>
</dbReference>
<dbReference type="PROSITE" id="PS51213">
    <property type="entry name" value="ELK"/>
    <property type="match status" value="1"/>
</dbReference>
<dbReference type="PROSITE" id="PS00027">
    <property type="entry name" value="HOMEOBOX_1"/>
    <property type="match status" value="1"/>
</dbReference>
<dbReference type="PROSITE" id="PS50071">
    <property type="entry name" value="HOMEOBOX_2"/>
    <property type="match status" value="1"/>
</dbReference>
<reference key="1">
    <citation type="journal article" date="1997" name="Plant Mol. Biol.">
        <title>Knotted1-like homeobox genes are expressed during apple tree (Malus domestica [L.] Borkh) growth and development.</title>
        <authorList>
            <person name="Watillon B."/>
            <person name="Kettmann R."/>
            <person name="Boxus P."/>
            <person name="Burny A."/>
        </authorList>
    </citation>
    <scope>NUCLEOTIDE SEQUENCE [MRNA]</scope>
    <source>
        <strain>cv. Wijcik</strain>
    </source>
</reference>
<comment type="function">
    <text>Probably binds to the DNA sequence 5'-TGAC-3'.</text>
</comment>
<comment type="subcellular location">
    <subcellularLocation>
        <location evidence="4">Nucleus</location>
    </subcellularLocation>
</comment>
<comment type="tissue specificity">
    <text>Expressed only in the stems.</text>
</comment>
<comment type="similarity">
    <text evidence="2">Belongs to the TALE/KNOX homeobox family.</text>
</comment>